<protein>
    <recommendedName>
        <fullName evidence="15">Neurexin-1-beta</fullName>
    </recommendedName>
    <alternativeName>
        <fullName>Neurexin I-beta</fullName>
    </alternativeName>
</protein>
<accession>Q63373</accession>
<sequence>MYQRMLRCGAELGSPGGGSSGGAGGRLALLWIVPLTLSGLLGVAWGASSLGAHHIHHFHGSSKHHSVPIAIYRSPASLRGGHAGTTYIFSKGGGQITYKWPPNDRPSTRADRLAIGFSTVQKEAVLVRVDSSSGLGDYLELHIHQGKIGVKFNVGTDDIAIEESNAIINDGKYHVVRFTRSGGNATLQVDSWPVIERYPAGNNDNERLAIARQRIPYRLGRVVDEWLLDKGRQLTIFNSQATIIIGGKEQGQPFQGQLSGLYYNGLKVLNMAAENDANIAIVGNVRLVGEVPSSMTTESTATAMQSEMSTSIMETTTTLATSTARRGKPPTKEPISQTTDDILVASAECPSDDEDIDPCEPSSGGLANPTRVGGREPYPGSAEVIRESSSTTGMVVGIVAAAALCILILLYAMYKYRNRDEGSYHVDESRNYISNSAQSNGAVVKEKQPSSAKSANKNKKNKDKEYYV</sequence>
<gene>
    <name evidence="16" type="primary">Nrxn1</name>
</gene>
<comment type="function">
    <text evidence="1 14">Neuronal cell surface protein involved in cell recognition and cell adhesion by forming intracellular junctions through binding to neuroligins (PubMed:9325340). Plays a role in formation of synaptic junctions (By similarity). Functions as part of a trans-synaptic complex by binding to cerebellins and postsynaptic GRID1. This interaction helps regulate the activity of NMDA and AMPA receptors at hippocampal synapses without affecting synapse formation. NRXN1B-CBLN2-GRID1 complex transduce presynaptic signals into postsynaptic NMDAR response (By similarity).</text>
</comment>
<comment type="subunit">
    <text evidence="1 2 6 7 8 12 13 14">The cytoplasmic C-terminal region binds to CASK (PubMed:8786425). Binds NLGN1, NLGN2 and NLGN3, DAG1 (alpha-dystroglycan) and alpha-latrotoxin. Binding to neuroligins is calcium-dependent, and the binding preference ranks as follow: NLGN1 &gt; NLGN4 &gt;&gt; NLGN3 &gt; NLGN2 (PubMed:10197529, PubMed:11470830, PubMed:17042500, PubMed:8576240, PubMed:9325340). Interacts with CBLN2 and more weakly with CBLN4 (By similarity). Interacts with CBLN1; interaction is CBLN1 hexamer form-dependent; CBLN1-binding is calcium-independent; isoform 1b does not interact with CBLN1 (By similarity). Interacts with CLSTN3 (By similarity).</text>
</comment>
<comment type="interaction">
    <interactant intactId="EBI-1780696">
        <id>Q63373</id>
    </interactant>
    <interactant intactId="EBI-1215506">
        <id>O14936</id>
        <label>CASK</label>
    </interactant>
    <organismsDiffer>true</organismsDiffer>
    <experiments>3</experiments>
</comment>
<comment type="interaction">
    <interactant intactId="EBI-20994045">
        <id>Q63373-3</id>
    </interactant>
    <interactant intactId="EBI-20994039">
        <id>Q62765-2</id>
        <label>Nlgn1</label>
    </interactant>
    <organismsDiffer>false</organismsDiffer>
    <experiments>5</experiments>
</comment>
<comment type="interaction">
    <interactant intactId="EBI-20994045">
        <id>Q63373-3</id>
    </interactant>
    <interactant intactId="EBI-2862707">
        <id>Q8N0W4</id>
        <label>NLGN4X</label>
    </interactant>
    <organismsDiffer>true</organismsDiffer>
    <experiments>5</experiments>
</comment>
<comment type="subcellular location">
    <subcellularLocation>
        <location evidence="9">Presynaptic cell membrane</location>
        <topology evidence="9">Single-pass type I membrane protein</topology>
    </subcellularLocation>
</comment>
<comment type="alternative products">
    <event type="alternative promoter"/>
    <event type="alternative splicing"/>
    <isoform>
        <id>Q63373-1</id>
        <name>1b</name>
        <name>Beta-4A5A</name>
        <sequence type="displayed"/>
    </isoform>
    <isoform>
        <id>Q63373-2</id>
        <name>2b</name>
        <name>Beta-4A5B</name>
        <sequence type="described" ref="VSP_003497"/>
    </isoform>
    <isoform>
        <id>Q63373-3</id>
        <name>3b</name>
        <name>Beta-4B5A</name>
        <sequence type="described" ref="VSP_003496"/>
    </isoform>
    <isoform>
        <id>Q63373-4</id>
        <name>4b</name>
        <name>Beta-4B5B</name>
        <sequence type="described" ref="VSP_003496 VSP_003497"/>
    </isoform>
    <isoform>
        <id>Q63372-2</id>
        <name>1a</name>
        <name>Alpha-1A2A3A4A5A</name>
        <sequence type="external"/>
    </isoform>
    <isoform>
        <id>Q63372-1</id>
        <name>2a</name>
        <name>Alpha-1B</name>
        <sequence type="external"/>
    </isoform>
    <isoform>
        <id>Q63372-3</id>
        <name>3a</name>
        <name>Alpha-1C</name>
        <sequence type="external"/>
    </isoform>
    <isoform>
        <id>Q63372-4</id>
        <name>4a</name>
        <name>Alpha-1D</name>
        <sequence type="external"/>
    </isoform>
    <isoform>
        <id>Q63372-5</id>
        <name>5a</name>
        <name>Alpha-1E</name>
        <sequence type="external"/>
    </isoform>
    <isoform>
        <id>Q63372-6</id>
        <name>6a</name>
        <name>Alpha-1F</name>
        <sequence type="external"/>
    </isoform>
    <isoform>
        <id>Q63372-7</id>
        <name>7a</name>
        <name>Alpha-1G</name>
        <sequence type="external"/>
    </isoform>
    <isoform>
        <id>Q63372-8</id>
        <name>8a</name>
        <name>Alpha-2B</name>
        <sequence type="external"/>
    </isoform>
    <isoform>
        <id>Q63372-9</id>
        <name>9a</name>
        <name>Alpha-2C</name>
        <sequence type="external"/>
    </isoform>
    <isoform>
        <id>Q63372-10</id>
        <name>10a</name>
        <name>Alpha-3B</name>
        <sequence type="external"/>
    </isoform>
    <isoform>
        <id>Q63372-11</id>
        <name>11a</name>
        <name>Alpha-4B</name>
        <sequence type="external"/>
    </isoform>
    <isoform>
        <id>Q63372-12</id>
        <name>12a</name>
        <name>Alpha-5B</name>
        <sequence type="external"/>
    </isoform>
    <isoform>
        <id>Q63372-13</id>
        <name>13a</name>
        <name>Alpha-1B2B</name>
        <sequence type="external"/>
    </isoform>
    <text>Two isoform types, alpha-type and beta-type are produced by alternative promoter usage. In addition there are at least five alternatively spliced sites, each of which may be spliced in up to seven different ways. Combinatorial splicing at each of these five sites may lead to the generation of at least 96 isoforms but for simplicity only individual splice events or observed combinations are explicitly described below. Beta-type isoforms share the possibility of alternative splicing at sites 4 and 5. Experimental confirmation may be lacking for some isoforms.</text>
</comment>
<comment type="tissue specificity">
    <text>Brain.</text>
</comment>
<comment type="PTM">
    <text evidence="11">N-glycosylated.</text>
</comment>
<comment type="PTM">
    <text evidence="1">O-glycosylated; contains heparan sulfate. Heparan sulfate attachment is required for synapse development by mediating interactions with neuroligins.</text>
</comment>
<comment type="similarity">
    <text evidence="15">Belongs to the neurexin family.</text>
</comment>
<organism>
    <name type="scientific">Rattus norvegicus</name>
    <name type="common">Rat</name>
    <dbReference type="NCBI Taxonomy" id="10116"/>
    <lineage>
        <taxon>Eukaryota</taxon>
        <taxon>Metazoa</taxon>
        <taxon>Chordata</taxon>
        <taxon>Craniata</taxon>
        <taxon>Vertebrata</taxon>
        <taxon>Euteleostomi</taxon>
        <taxon>Mammalia</taxon>
        <taxon>Eutheria</taxon>
        <taxon>Euarchontoglires</taxon>
        <taxon>Glires</taxon>
        <taxon>Rodentia</taxon>
        <taxon>Myomorpha</taxon>
        <taxon>Muroidea</taxon>
        <taxon>Muridae</taxon>
        <taxon>Murinae</taxon>
        <taxon>Rattus</taxon>
    </lineage>
</organism>
<proteinExistence type="evidence at protein level"/>
<reference key="1">
    <citation type="journal article" date="1992" name="Science">
        <title>Neurexins: synaptic cell surface proteins related to the alpha-latrotoxin receptor and laminin.</title>
        <authorList>
            <person name="Ushkaryov Y.A."/>
            <person name="Petrenko A.G."/>
            <person name="Geppert M."/>
            <person name="Suedhof T.C."/>
        </authorList>
    </citation>
    <scope>NUCLEOTIDE SEQUENCE [MRNA]</scope>
    <scope>ALTERNATIVE SPLICING</scope>
    <source>
        <tissue>Brain</tissue>
    </source>
</reference>
<reference key="2">
    <citation type="journal article" date="1994" name="J. Biol. Chem.">
        <title>Conserved domain structure of beta-neurexins. Unusual cleaved signal sequences in receptor-like neuronal cell-surface proteins.</title>
        <authorList>
            <person name="Ushkaryov Y.A."/>
            <person name="Hata Y."/>
            <person name="Ichtchenko K."/>
            <person name="Moomaw C."/>
            <person name="Afendis S."/>
            <person name="Slaughter C.A."/>
            <person name="Suedhof T.C."/>
        </authorList>
    </citation>
    <scope>PROTEIN SEQUENCE OF N-TERMINUS</scope>
    <scope>GLYCOSYLATION</scope>
    <source>
        <tissue>Brain</tissue>
    </source>
</reference>
<reference key="3">
    <citation type="journal article" date="1997" name="J. Biol. Chem.">
        <title>Binding properties of neuroligin 1 and neurexin 1beta reveal function as heterophilic cell adhesion molecules.</title>
        <authorList>
            <person name="Nguyen T."/>
            <person name="Suedhof T.C."/>
        </authorList>
    </citation>
    <scope>FUNCTION</scope>
    <scope>INTERACTION WITH NLGN1</scope>
</reference>
<reference key="4">
    <citation type="journal article" date="1996" name="J. Biol. Chem.">
        <title>Structures, alternative splicing, and neurexin binding of multiple neuroligins.</title>
        <authorList>
            <person name="Ichtchenko K."/>
            <person name="Nguyen T."/>
            <person name="Suedhof T.C."/>
        </authorList>
    </citation>
    <scope>INTERACTION WITH NLGN1; NLGN2 AND NLGN3</scope>
    <scope>REGION</scope>
</reference>
<reference key="5">
    <citation type="journal article" date="1996" name="J. Neurosci.">
        <title>CASK: a novel dlg/PSD95 homolog with an N-terminal calmodulin-dependent protein kinase domain identified by interaction with neurexins.</title>
        <authorList>
            <person name="Hata Y."/>
            <person name="Butz S."/>
            <person name="Suedhof T.C."/>
        </authorList>
    </citation>
    <scope>INTERACTION WITH CASK</scope>
</reference>
<reference key="6">
    <citation type="journal article" date="1999" name="Neuron">
        <title>Neurexins are functional alpha-latrotoxin receptors.</title>
        <authorList>
            <person name="Sugita S."/>
            <person name="Khvochtev M."/>
            <person name="Suedhof T.C."/>
        </authorList>
    </citation>
    <scope>INTERACTION WITH ALPHA-LATROTOXIN</scope>
    <scope>REGION</scope>
</reference>
<reference key="7">
    <citation type="journal article" date="2001" name="J. Cell Biol.">
        <title>A stoichiometric complex of neurexins and dystroglycan in brain.</title>
        <authorList>
            <person name="Sugita S."/>
            <person name="Saito F."/>
            <person name="Tang J."/>
            <person name="Satz J."/>
            <person name="Campbell K."/>
            <person name="Suedhof T.C."/>
        </authorList>
    </citation>
    <scope>INTERACTION WITH DAG1 (ALPHA-DYSTROGLYCAN)</scope>
    <scope>REGION</scope>
</reference>
<reference key="8">
    <citation type="journal article" date="2006" name="Biochemistry">
        <title>Gene selection, alternative splicing, and post-translational processing regulate neuroligin selectivity for beta-neurexins.</title>
        <authorList>
            <person name="Comoletti D."/>
            <person name="Flynn R.E."/>
            <person name="Boucard A.A."/>
            <person name="Demeler B."/>
            <person name="Schirf V."/>
            <person name="Shi J."/>
            <person name="Jennings L.L."/>
            <person name="Newlin H.R."/>
            <person name="Sudhof T.C."/>
            <person name="Taylor P."/>
        </authorList>
    </citation>
    <scope>SUBUNIT</scope>
</reference>
<reference key="9">
    <citation type="journal article" date="2007" name="J. Neurochem.">
        <title>Neurexin Ibeta and neuroligin are localized on opposite membranes in mature central synapses.</title>
        <authorList>
            <person name="Berninghausen O."/>
            <person name="Rahman M.A."/>
            <person name="Silva J.P."/>
            <person name="Davletov B."/>
            <person name="Hopkins C."/>
            <person name="Ushkaryov Y.A."/>
        </authorList>
    </citation>
    <scope>SUBCELLULAR LOCATION</scope>
</reference>
<reference key="10">
    <citation type="journal article" date="1999" name="Cell">
        <title>The structure of the ligand-binding domain of neurexin Ibeta: regulation of LNS domain function by alternative splicing.</title>
        <authorList>
            <person name="Rudenko G."/>
            <person name="Nguyen T."/>
            <person name="Chelliah Y."/>
            <person name="Suedhof T.C."/>
            <person name="Deisenhofer J."/>
        </authorList>
    </citation>
    <scope>X-RAY CRYSTALLOGRAPHY (2.6 ANGSTROMS) OF 47-302</scope>
</reference>
<reference key="11">
    <citation type="journal article" date="2007" name="Neuron">
        <title>Structural analysis of the synaptic protein neuroligin and its beta-neurexin complex: determinants for folding and cell adhesion.</title>
        <authorList>
            <person name="Fabrichny I.P."/>
            <person name="Leone P."/>
            <person name="Sulzenbacher G."/>
            <person name="Comoletti D."/>
            <person name="Miller M.T."/>
            <person name="Taylor P."/>
            <person name="Bourne Y."/>
            <person name="Marchot P."/>
        </authorList>
    </citation>
    <scope>X-RAY CRYSTALLOGRAPHY (3.9 ANGSTROMS) OF 80-288 IN COMPLEX WITH HUMAN NLGN4X</scope>
    <scope>CALCIUM-BINDING SITES</scope>
</reference>
<dbReference type="EMBL" id="M96375">
    <property type="protein sequence ID" value="AAA41705.1"/>
    <property type="molecule type" value="mRNA"/>
</dbReference>
<dbReference type="PIR" id="B40228">
    <property type="entry name" value="B40228"/>
</dbReference>
<dbReference type="PDB" id="1C4R">
    <property type="method" value="X-ray"/>
    <property type="resolution" value="2.60 A"/>
    <property type="chains" value="A/B/C/D/E/F/G/H=81-292"/>
</dbReference>
<dbReference type="PDB" id="2R1B">
    <property type="method" value="X-ray"/>
    <property type="resolution" value="1.72 A"/>
    <property type="chains" value="A/B=77-294"/>
</dbReference>
<dbReference type="PDB" id="2R1D">
    <property type="method" value="X-ray"/>
    <property type="resolution" value="2.60 A"/>
    <property type="chains" value="A/B/C/D/E/F/G/H/I/W=48-302"/>
</dbReference>
<dbReference type="PDB" id="2WQZ">
    <property type="method" value="X-ray"/>
    <property type="resolution" value="3.90 A"/>
    <property type="chains" value="C/D=80-288"/>
</dbReference>
<dbReference type="PDB" id="2XB6">
    <property type="method" value="X-ray"/>
    <property type="resolution" value="2.60 A"/>
    <property type="chains" value="C/D=80-288"/>
</dbReference>
<dbReference type="PDBsum" id="1C4R"/>
<dbReference type="PDBsum" id="2R1B"/>
<dbReference type="PDBsum" id="2R1D"/>
<dbReference type="PDBsum" id="2WQZ"/>
<dbReference type="PDBsum" id="2XB6"/>
<dbReference type="EMDB" id="EMD-6666"/>
<dbReference type="SMR" id="Q63373"/>
<dbReference type="ComplexPortal" id="CPX-4061">
    <molecule id="Q63373-3"/>
    <property type="entry name" value="NLGN1(-SSA-SSB) - NRXN1-beta(-SS4) complex"/>
</dbReference>
<dbReference type="ComplexPortal" id="CPX-4123">
    <molecule id="Q63373-3"/>
    <property type="entry name" value="NLGN1(+SSA+SSB) - NRXN1-beta(-SS4) complex"/>
</dbReference>
<dbReference type="CORUM" id="Q63373"/>
<dbReference type="DIP" id="DIP-40508N"/>
<dbReference type="IntAct" id="Q63373">
    <property type="interactions" value="5"/>
</dbReference>
<dbReference type="MINT" id="Q63373"/>
<dbReference type="GlyCosmos" id="Q63373">
    <property type="glycosylation" value="1 site, No reported glycans"/>
</dbReference>
<dbReference type="PaxDb" id="10116-ENSRNOP00000066979"/>
<dbReference type="ABCD" id="Q63373">
    <property type="antibodies" value="2 sequenced antibodies"/>
</dbReference>
<dbReference type="UCSC" id="RGD:628659">
    <molecule id="Q63373-1"/>
    <property type="organism name" value="rat"/>
</dbReference>
<dbReference type="AGR" id="RGD:628659"/>
<dbReference type="RGD" id="628659">
    <property type="gene designation" value="Nrxn1"/>
</dbReference>
<dbReference type="eggNOG" id="KOG3514">
    <property type="taxonomic scope" value="Eukaryota"/>
</dbReference>
<dbReference type="PhylomeDB" id="Q63373"/>
<dbReference type="EvolutionaryTrace" id="Q63373"/>
<dbReference type="Proteomes" id="UP000002494">
    <property type="component" value="Unplaced"/>
</dbReference>
<dbReference type="GO" id="GO:0044295">
    <property type="term" value="C:axonal growth cone"/>
    <property type="evidence" value="ECO:0000250"/>
    <property type="project" value="BHF-UCL"/>
</dbReference>
<dbReference type="GO" id="GO:0009986">
    <property type="term" value="C:cell surface"/>
    <property type="evidence" value="ECO:0000314"/>
    <property type="project" value="BHF-UCL"/>
</dbReference>
<dbReference type="GO" id="GO:0030139">
    <property type="term" value="C:endocytic vesicle"/>
    <property type="evidence" value="ECO:0000314"/>
    <property type="project" value="BHF-UCL"/>
</dbReference>
<dbReference type="GO" id="GO:0005783">
    <property type="term" value="C:endoplasmic reticulum"/>
    <property type="evidence" value="ECO:0000250"/>
    <property type="project" value="BHF-UCL"/>
</dbReference>
<dbReference type="GO" id="GO:0060076">
    <property type="term" value="C:excitatory synapse"/>
    <property type="evidence" value="ECO:0000303"/>
    <property type="project" value="ComplexPortal"/>
</dbReference>
<dbReference type="GO" id="GO:0098982">
    <property type="term" value="C:GABA-ergic synapse"/>
    <property type="evidence" value="ECO:0000266"/>
    <property type="project" value="RGD"/>
</dbReference>
<dbReference type="GO" id="GO:0098978">
    <property type="term" value="C:glutamatergic synapse"/>
    <property type="evidence" value="ECO:0000266"/>
    <property type="project" value="RGD"/>
</dbReference>
<dbReference type="GO" id="GO:0060077">
    <property type="term" value="C:inhibitory synapse"/>
    <property type="evidence" value="ECO:0000303"/>
    <property type="project" value="ComplexPortal"/>
</dbReference>
<dbReference type="GO" id="GO:0031594">
    <property type="term" value="C:neuromuscular junction"/>
    <property type="evidence" value="ECO:0000303"/>
    <property type="project" value="ComplexPortal"/>
</dbReference>
<dbReference type="GO" id="GO:0098984">
    <property type="term" value="C:neuron to neuron synapse"/>
    <property type="evidence" value="ECO:0000303"/>
    <property type="project" value="ComplexPortal"/>
</dbReference>
<dbReference type="GO" id="GO:0043025">
    <property type="term" value="C:neuronal cell body"/>
    <property type="evidence" value="ECO:0000250"/>
    <property type="project" value="BHF-UCL"/>
</dbReference>
<dbReference type="GO" id="GO:0031965">
    <property type="term" value="C:nuclear membrane"/>
    <property type="evidence" value="ECO:0000250"/>
    <property type="project" value="BHF-UCL"/>
</dbReference>
<dbReference type="GO" id="GO:0005886">
    <property type="term" value="C:plasma membrane"/>
    <property type="evidence" value="ECO:0000303"/>
    <property type="project" value="ComplexPortal"/>
</dbReference>
<dbReference type="GO" id="GO:0048787">
    <property type="term" value="C:presynaptic active zone membrane"/>
    <property type="evidence" value="ECO:0000266"/>
    <property type="project" value="RGD"/>
</dbReference>
<dbReference type="GO" id="GO:0042734">
    <property type="term" value="C:presynaptic membrane"/>
    <property type="evidence" value="ECO:0000250"/>
    <property type="project" value="BHF-UCL"/>
</dbReference>
<dbReference type="GO" id="GO:0098635">
    <property type="term" value="C:protein complex involved in cell-cell adhesion"/>
    <property type="evidence" value="ECO:0000353"/>
    <property type="project" value="ComplexPortal"/>
</dbReference>
<dbReference type="GO" id="GO:0032991">
    <property type="term" value="C:protein-containing complex"/>
    <property type="evidence" value="ECO:0000266"/>
    <property type="project" value="RGD"/>
</dbReference>
<dbReference type="GO" id="GO:0098685">
    <property type="term" value="C:Schaffer collateral - CA1 synapse"/>
    <property type="evidence" value="ECO:0000266"/>
    <property type="project" value="RGD"/>
</dbReference>
<dbReference type="GO" id="GO:0036057">
    <property type="term" value="C:slit diaphragm"/>
    <property type="evidence" value="ECO:0000314"/>
    <property type="project" value="RGD"/>
</dbReference>
<dbReference type="GO" id="GO:0098820">
    <property type="term" value="C:trans-synaptic protein complex"/>
    <property type="evidence" value="ECO:0000266"/>
    <property type="project" value="RGD"/>
</dbReference>
<dbReference type="GO" id="GO:0031982">
    <property type="term" value="C:vesicle"/>
    <property type="evidence" value="ECO:0000266"/>
    <property type="project" value="RGD"/>
</dbReference>
<dbReference type="GO" id="GO:0033130">
    <property type="term" value="F:acetylcholine receptor binding"/>
    <property type="evidence" value="ECO:0000266"/>
    <property type="project" value="RGD"/>
</dbReference>
<dbReference type="GO" id="GO:0005246">
    <property type="term" value="F:calcium channel regulator activity"/>
    <property type="evidence" value="ECO:0000266"/>
    <property type="project" value="RGD"/>
</dbReference>
<dbReference type="GO" id="GO:0005509">
    <property type="term" value="F:calcium ion binding"/>
    <property type="evidence" value="ECO:0000314"/>
    <property type="project" value="RGD"/>
</dbReference>
<dbReference type="GO" id="GO:0048306">
    <property type="term" value="F:calcium-dependent protein binding"/>
    <property type="evidence" value="ECO:0000250"/>
    <property type="project" value="BHF-UCL"/>
</dbReference>
<dbReference type="GO" id="GO:0050839">
    <property type="term" value="F:cell adhesion molecule binding"/>
    <property type="evidence" value="ECO:0000353"/>
    <property type="project" value="BHF-UCL"/>
</dbReference>
<dbReference type="GO" id="GO:0097109">
    <property type="term" value="F:neuroligin family protein binding"/>
    <property type="evidence" value="ECO:0000353"/>
    <property type="project" value="ARUK-UCL"/>
</dbReference>
<dbReference type="GO" id="GO:0044877">
    <property type="term" value="F:protein-containing complex binding"/>
    <property type="evidence" value="ECO:0000314"/>
    <property type="project" value="RGD"/>
</dbReference>
<dbReference type="GO" id="GO:0005102">
    <property type="term" value="F:signaling receptor binding"/>
    <property type="evidence" value="ECO:0000353"/>
    <property type="project" value="BHF-UCL"/>
</dbReference>
<dbReference type="GO" id="GO:0004888">
    <property type="term" value="F:transmembrane signaling receptor activity"/>
    <property type="evidence" value="ECO:0000314"/>
    <property type="project" value="BHF-UCL"/>
</dbReference>
<dbReference type="GO" id="GO:0005105">
    <property type="term" value="F:type 1 fibroblast growth factor receptor binding"/>
    <property type="evidence" value="ECO:0000266"/>
    <property type="project" value="RGD"/>
</dbReference>
<dbReference type="GO" id="GO:0030534">
    <property type="term" value="P:adult behavior"/>
    <property type="evidence" value="ECO:0000266"/>
    <property type="project" value="RGD"/>
</dbReference>
<dbReference type="GO" id="GO:0098990">
    <property type="term" value="P:AMPA selective glutamate receptor signaling pathway"/>
    <property type="evidence" value="ECO:0000250"/>
    <property type="project" value="BHF-UCL"/>
</dbReference>
<dbReference type="GO" id="GO:0001525">
    <property type="term" value="P:angiogenesis"/>
    <property type="evidence" value="ECO:0000250"/>
    <property type="project" value="UniProtKB"/>
</dbReference>
<dbReference type="GO" id="GO:0016339">
    <property type="term" value="P:calcium-dependent cell-cell adhesion via plasma membrane cell adhesion molecules"/>
    <property type="evidence" value="ECO:0000250"/>
    <property type="project" value="BHF-UCL"/>
</dbReference>
<dbReference type="GO" id="GO:0090125">
    <property type="term" value="P:cell-cell adhesion involved in synapse maturation"/>
    <property type="evidence" value="ECO:0000303"/>
    <property type="project" value="ComplexPortal"/>
</dbReference>
<dbReference type="GO" id="GO:0071277">
    <property type="term" value="P:cellular response to calcium ion"/>
    <property type="evidence" value="ECO:0000314"/>
    <property type="project" value="ARUK-UCL"/>
</dbReference>
<dbReference type="GO" id="GO:0021707">
    <property type="term" value="P:cerebellar granule cell differentiation"/>
    <property type="evidence" value="ECO:0000250"/>
    <property type="project" value="BHF-UCL"/>
</dbReference>
<dbReference type="GO" id="GO:0007268">
    <property type="term" value="P:chemical synaptic transmission"/>
    <property type="evidence" value="ECO:0000266"/>
    <property type="project" value="RGD"/>
</dbReference>
<dbReference type="GO" id="GO:0007623">
    <property type="term" value="P:circadian rhythm"/>
    <property type="evidence" value="ECO:0000270"/>
    <property type="project" value="RGD"/>
</dbReference>
<dbReference type="GO" id="GO:0045184">
    <property type="term" value="P:establishment of protein localization"/>
    <property type="evidence" value="ECO:0000250"/>
    <property type="project" value="BHF-UCL"/>
</dbReference>
<dbReference type="GO" id="GO:0097112">
    <property type="term" value="P:gamma-aminobutyric acid receptor clustering"/>
    <property type="evidence" value="ECO:0000250"/>
    <property type="project" value="BHF-UCL"/>
</dbReference>
<dbReference type="GO" id="GO:0097116">
    <property type="term" value="P:gephyrin clustering involved in postsynaptic density assembly"/>
    <property type="evidence" value="ECO:0000250"/>
    <property type="project" value="BHF-UCL"/>
</dbReference>
<dbReference type="GO" id="GO:0097117">
    <property type="term" value="P:guanylate kinase-associated protein clustering"/>
    <property type="evidence" value="ECO:0000250"/>
    <property type="project" value="BHF-UCL"/>
</dbReference>
<dbReference type="GO" id="GO:0007157">
    <property type="term" value="P:heterophilic cell-cell adhesion via plasma membrane cell adhesion molecules"/>
    <property type="evidence" value="ECO:0000250"/>
    <property type="project" value="BHF-UCL"/>
</dbReference>
<dbReference type="GO" id="GO:0007612">
    <property type="term" value="P:learning"/>
    <property type="evidence" value="ECO:0000266"/>
    <property type="project" value="RGD"/>
</dbReference>
<dbReference type="GO" id="GO:0099558">
    <property type="term" value="P:maintenance of synapse structure"/>
    <property type="evidence" value="ECO:0000303"/>
    <property type="project" value="ComplexPortal"/>
</dbReference>
<dbReference type="GO" id="GO:0051490">
    <property type="term" value="P:negative regulation of filopodium assembly"/>
    <property type="evidence" value="ECO:0000250"/>
    <property type="project" value="BHF-UCL"/>
</dbReference>
<dbReference type="GO" id="GO:0010629">
    <property type="term" value="P:negative regulation of gene expression"/>
    <property type="evidence" value="ECO:0000266"/>
    <property type="project" value="RGD"/>
</dbReference>
<dbReference type="GO" id="GO:0097118">
    <property type="term" value="P:neuroligin clustering involved in postsynaptic membrane assembly"/>
    <property type="evidence" value="ECO:0000250"/>
    <property type="project" value="BHF-UCL"/>
</dbReference>
<dbReference type="GO" id="GO:0050885">
    <property type="term" value="P:neuromuscular process controlling balance"/>
    <property type="evidence" value="ECO:0000266"/>
    <property type="project" value="RGD"/>
</dbReference>
<dbReference type="GO" id="GO:0007158">
    <property type="term" value="P:neuron cell-cell adhesion"/>
    <property type="evidence" value="ECO:0000250"/>
    <property type="project" value="BHF-UCL"/>
</dbReference>
<dbReference type="GO" id="GO:0031175">
    <property type="term" value="P:neuron projection development"/>
    <property type="evidence" value="ECO:0000266"/>
    <property type="project" value="RGD"/>
</dbReference>
<dbReference type="GO" id="GO:0048812">
    <property type="term" value="P:neuron projection morphogenesis"/>
    <property type="evidence" value="ECO:0000303"/>
    <property type="project" value="ComplexPortal"/>
</dbReference>
<dbReference type="GO" id="GO:0007269">
    <property type="term" value="P:neurotransmitter secretion"/>
    <property type="evidence" value="ECO:0000266"/>
    <property type="project" value="RGD"/>
</dbReference>
<dbReference type="GO" id="GO:0097114">
    <property type="term" value="P:NMDA glutamate receptor clustering"/>
    <property type="evidence" value="ECO:0000250"/>
    <property type="project" value="BHF-UCL"/>
</dbReference>
<dbReference type="GO" id="GO:0098989">
    <property type="term" value="P:NMDA selective glutamate receptor signaling pathway"/>
    <property type="evidence" value="ECO:0000250"/>
    <property type="project" value="BHF-UCL"/>
</dbReference>
<dbReference type="GO" id="GO:0043950">
    <property type="term" value="P:positive regulation of cAMP-mediated signaling"/>
    <property type="evidence" value="ECO:0000266"/>
    <property type="project" value="RGD"/>
</dbReference>
<dbReference type="GO" id="GO:0070374">
    <property type="term" value="P:positive regulation of ERK1 and ERK2 cascade"/>
    <property type="evidence" value="ECO:0000266"/>
    <property type="project" value="RGD"/>
</dbReference>
<dbReference type="GO" id="GO:2000463">
    <property type="term" value="P:positive regulation of excitatory postsynaptic potential"/>
    <property type="evidence" value="ECO:0000250"/>
    <property type="project" value="BHF-UCL"/>
</dbReference>
<dbReference type="GO" id="GO:0045743">
    <property type="term" value="P:positive regulation of fibroblast growth factor receptor signaling pathway"/>
    <property type="evidence" value="ECO:0000266"/>
    <property type="project" value="RGD"/>
</dbReference>
<dbReference type="GO" id="GO:0010628">
    <property type="term" value="P:positive regulation of gene expression"/>
    <property type="evidence" value="ECO:0000266"/>
    <property type="project" value="RGD"/>
</dbReference>
<dbReference type="GO" id="GO:1900075">
    <property type="term" value="P:positive regulation of neuromuscular synaptic transmission"/>
    <property type="evidence" value="ECO:0000303"/>
    <property type="project" value="ComplexPortal"/>
</dbReference>
<dbReference type="GO" id="GO:0010976">
    <property type="term" value="P:positive regulation of neuron projection development"/>
    <property type="evidence" value="ECO:0000303"/>
    <property type="project" value="ComplexPortal"/>
</dbReference>
<dbReference type="GO" id="GO:0051897">
    <property type="term" value="P:positive regulation of phosphatidylinositol 3-kinase/protein kinase B signal transduction"/>
    <property type="evidence" value="ECO:0000266"/>
    <property type="project" value="RGD"/>
</dbReference>
<dbReference type="GO" id="GO:1900738">
    <property type="term" value="P:positive regulation of phospholipase C-activating G protein-coupled receptor signaling pathway"/>
    <property type="evidence" value="ECO:0000266"/>
    <property type="project" value="RGD"/>
</dbReference>
<dbReference type="GO" id="GO:1905520">
    <property type="term" value="P:positive regulation of presynaptic active zone assembly"/>
    <property type="evidence" value="ECO:0000304"/>
    <property type="project" value="BHF-UCL"/>
</dbReference>
<dbReference type="GO" id="GO:1903078">
    <property type="term" value="P:positive regulation of protein localization to plasma membrane"/>
    <property type="evidence" value="ECO:0000250"/>
    <property type="project" value="BHF-UCL"/>
</dbReference>
<dbReference type="GO" id="GO:0051965">
    <property type="term" value="P:positive regulation of synapse assembly"/>
    <property type="evidence" value="ECO:0000266"/>
    <property type="project" value="RGD"/>
</dbReference>
<dbReference type="GO" id="GO:0090129">
    <property type="term" value="P:positive regulation of synapse maturation"/>
    <property type="evidence" value="ECO:0000266"/>
    <property type="project" value="RGD"/>
</dbReference>
<dbReference type="GO" id="GO:0032230">
    <property type="term" value="P:positive regulation of synaptic transmission, GABAergic"/>
    <property type="evidence" value="ECO:0000303"/>
    <property type="project" value="ComplexPortal"/>
</dbReference>
<dbReference type="GO" id="GO:0051968">
    <property type="term" value="P:positive regulation of synaptic transmission, glutamatergic"/>
    <property type="evidence" value="ECO:0000250"/>
    <property type="project" value="BHF-UCL"/>
</dbReference>
<dbReference type="GO" id="GO:0097119">
    <property type="term" value="P:postsynaptic density protein 95 clustering"/>
    <property type="evidence" value="ECO:0000250"/>
    <property type="project" value="BHF-UCL"/>
</dbReference>
<dbReference type="GO" id="GO:0097104">
    <property type="term" value="P:postsynaptic membrane assembly"/>
    <property type="evidence" value="ECO:0000250"/>
    <property type="project" value="BHF-UCL"/>
</dbReference>
<dbReference type="GO" id="GO:0060134">
    <property type="term" value="P:prepulse inhibition"/>
    <property type="evidence" value="ECO:0000266"/>
    <property type="project" value="RGD"/>
</dbReference>
<dbReference type="GO" id="GO:0099054">
    <property type="term" value="P:presynapse assembly"/>
    <property type="evidence" value="ECO:0000314"/>
    <property type="project" value="SynGO"/>
</dbReference>
<dbReference type="GO" id="GO:0097105">
    <property type="term" value="P:presynaptic membrane assembly"/>
    <property type="evidence" value="ECO:0000250"/>
    <property type="project" value="BHF-UCL"/>
</dbReference>
<dbReference type="GO" id="GO:0035418">
    <property type="term" value="P:protein localization to synapse"/>
    <property type="evidence" value="ECO:0000250"/>
    <property type="project" value="BHF-UCL"/>
</dbReference>
<dbReference type="GO" id="GO:0090126">
    <property type="term" value="P:protein-containing complex assembly involved in synapse maturation"/>
    <property type="evidence" value="ECO:0000250"/>
    <property type="project" value="BHF-UCL"/>
</dbReference>
<dbReference type="GO" id="GO:0097120">
    <property type="term" value="P:receptor localization to synapse"/>
    <property type="evidence" value="ECO:0000250"/>
    <property type="project" value="BHF-UCL"/>
</dbReference>
<dbReference type="GO" id="GO:2000821">
    <property type="term" value="P:regulation of grooming behavior"/>
    <property type="evidence" value="ECO:0000266"/>
    <property type="project" value="RGD"/>
</dbReference>
<dbReference type="GO" id="GO:0099151">
    <property type="term" value="P:regulation of postsynaptic density assembly"/>
    <property type="evidence" value="ECO:0000266"/>
    <property type="project" value="RGD"/>
</dbReference>
<dbReference type="GO" id="GO:0099150">
    <property type="term" value="P:regulation of postsynaptic specialization assembly"/>
    <property type="evidence" value="ECO:0000266"/>
    <property type="project" value="RGD"/>
</dbReference>
<dbReference type="GO" id="GO:1905606">
    <property type="term" value="P:regulation of presynapse assembly"/>
    <property type="evidence" value="ECO:0000266"/>
    <property type="project" value="RGD"/>
</dbReference>
<dbReference type="GO" id="GO:0098693">
    <property type="term" value="P:regulation of synaptic vesicle cycle"/>
    <property type="evidence" value="ECO:0000266"/>
    <property type="project" value="RGD"/>
</dbReference>
<dbReference type="GO" id="GO:0150036">
    <property type="term" value="P:regulation of trans-synaptic signaling by endocannabinoid, modulating synaptic transmission"/>
    <property type="evidence" value="ECO:0000266"/>
    <property type="project" value="RGD"/>
</dbReference>
<dbReference type="GO" id="GO:0007165">
    <property type="term" value="P:signal transduction"/>
    <property type="evidence" value="ECO:0000314"/>
    <property type="project" value="BHF-UCL"/>
</dbReference>
<dbReference type="GO" id="GO:0035176">
    <property type="term" value="P:social behavior"/>
    <property type="evidence" value="ECO:0000266"/>
    <property type="project" value="RGD"/>
</dbReference>
<dbReference type="GO" id="GO:0007416">
    <property type="term" value="P:synapse assembly"/>
    <property type="evidence" value="ECO:0000250"/>
    <property type="project" value="BHF-UCL"/>
</dbReference>
<dbReference type="GO" id="GO:0060074">
    <property type="term" value="P:synapse maturation"/>
    <property type="evidence" value="ECO:0000303"/>
    <property type="project" value="ComplexPortal"/>
</dbReference>
<dbReference type="GO" id="GO:0099560">
    <property type="term" value="P:synaptic membrane adhesion"/>
    <property type="evidence" value="ECO:0000266"/>
    <property type="project" value="RGD"/>
</dbReference>
<dbReference type="GO" id="GO:0097091">
    <property type="term" value="P:synaptic vesicle clustering"/>
    <property type="evidence" value="ECO:0000250"/>
    <property type="project" value="BHF-UCL"/>
</dbReference>
<dbReference type="GO" id="GO:0099550">
    <property type="term" value="P:trans-synaptic signaling, modulating synaptic transmission"/>
    <property type="evidence" value="ECO:0000266"/>
    <property type="project" value="RGD"/>
</dbReference>
<dbReference type="GO" id="GO:0042297">
    <property type="term" value="P:vocal learning"/>
    <property type="evidence" value="ECO:0000266"/>
    <property type="project" value="RGD"/>
</dbReference>
<dbReference type="GO" id="GO:0071625">
    <property type="term" value="P:vocalization behavior"/>
    <property type="evidence" value="ECO:0000266"/>
    <property type="project" value="RGD"/>
</dbReference>
<dbReference type="CDD" id="cd00110">
    <property type="entry name" value="LamG"/>
    <property type="match status" value="1"/>
</dbReference>
<dbReference type="FunFam" id="2.60.120.200:FF:000003">
    <property type="entry name" value="neurexin-1 isoform X1"/>
    <property type="match status" value="1"/>
</dbReference>
<dbReference type="Gene3D" id="2.60.120.200">
    <property type="match status" value="1"/>
</dbReference>
<dbReference type="InterPro" id="IPR013320">
    <property type="entry name" value="ConA-like_dom_sf"/>
</dbReference>
<dbReference type="InterPro" id="IPR001791">
    <property type="entry name" value="Laminin_G"/>
</dbReference>
<dbReference type="InterPro" id="IPR003585">
    <property type="entry name" value="Neurexin-like"/>
</dbReference>
<dbReference type="InterPro" id="IPR050372">
    <property type="entry name" value="Neurexin-related_CASP"/>
</dbReference>
<dbReference type="InterPro" id="IPR027789">
    <property type="entry name" value="Syndecan/Neurexin_dom"/>
</dbReference>
<dbReference type="PANTHER" id="PTHR15036:SF51">
    <property type="entry name" value="NEUREXIN-1"/>
    <property type="match status" value="1"/>
</dbReference>
<dbReference type="PANTHER" id="PTHR15036">
    <property type="entry name" value="PIKACHURIN-LIKE PROTEIN"/>
    <property type="match status" value="1"/>
</dbReference>
<dbReference type="Pfam" id="PF02210">
    <property type="entry name" value="Laminin_G_2"/>
    <property type="match status" value="1"/>
</dbReference>
<dbReference type="Pfam" id="PF01034">
    <property type="entry name" value="Syndecan"/>
    <property type="match status" value="1"/>
</dbReference>
<dbReference type="SMART" id="SM00294">
    <property type="entry name" value="4.1m"/>
    <property type="match status" value="1"/>
</dbReference>
<dbReference type="SMART" id="SM00282">
    <property type="entry name" value="LamG"/>
    <property type="match status" value="1"/>
</dbReference>
<dbReference type="SUPFAM" id="SSF49899">
    <property type="entry name" value="Concanavalin A-like lectins/glucanases"/>
    <property type="match status" value="1"/>
</dbReference>
<dbReference type="PROSITE" id="PS50025">
    <property type="entry name" value="LAM_G_DOMAIN"/>
    <property type="match status" value="1"/>
</dbReference>
<evidence type="ECO:0000250" key="1">
    <source>
        <dbReference type="UniProtKB" id="P0DI97"/>
    </source>
</evidence>
<evidence type="ECO:0000250" key="2">
    <source>
        <dbReference type="UniProtKB" id="P58400"/>
    </source>
</evidence>
<evidence type="ECO:0000255" key="3"/>
<evidence type="ECO:0000255" key="4">
    <source>
        <dbReference type="PROSITE-ProRule" id="PRU00122"/>
    </source>
</evidence>
<evidence type="ECO:0000256" key="5">
    <source>
        <dbReference type="SAM" id="MobiDB-lite"/>
    </source>
</evidence>
<evidence type="ECO:0000269" key="6">
    <source>
    </source>
</evidence>
<evidence type="ECO:0000269" key="7">
    <source>
    </source>
</evidence>
<evidence type="ECO:0000269" key="8">
    <source>
    </source>
</evidence>
<evidence type="ECO:0000269" key="9">
    <source>
    </source>
</evidence>
<evidence type="ECO:0000269" key="10">
    <source>
    </source>
</evidence>
<evidence type="ECO:0000269" key="11">
    <source>
    </source>
</evidence>
<evidence type="ECO:0000269" key="12">
    <source>
    </source>
</evidence>
<evidence type="ECO:0000269" key="13">
    <source>
    </source>
</evidence>
<evidence type="ECO:0000269" key="14">
    <source>
    </source>
</evidence>
<evidence type="ECO:0000305" key="15"/>
<evidence type="ECO:0000312" key="16">
    <source>
        <dbReference type="RGD" id="628659"/>
    </source>
</evidence>
<evidence type="ECO:0007829" key="17">
    <source>
        <dbReference type="PDB" id="2R1B"/>
    </source>
</evidence>
<feature type="signal peptide" evidence="11">
    <location>
        <begin position="1"/>
        <end position="46"/>
    </location>
</feature>
<feature type="chain" id="PRO_0000019494" description="Neurexin-1-beta">
    <location>
        <begin position="47"/>
        <end position="468"/>
    </location>
</feature>
<feature type="topological domain" description="Extracellular" evidence="3">
    <location>
        <begin position="47"/>
        <end position="391"/>
    </location>
</feature>
<feature type="transmembrane region" description="Helical" evidence="3">
    <location>
        <begin position="392"/>
        <end position="414"/>
    </location>
</feature>
<feature type="topological domain" description="Cytoplasmic" evidence="3">
    <location>
        <begin position="415"/>
        <end position="468"/>
    </location>
</feature>
<feature type="domain" description="Laminin G-like" evidence="4">
    <location>
        <begin position="87"/>
        <end position="285"/>
    </location>
</feature>
<feature type="region of interest" description="Essential for interaction with CBLN1; modulates interaction affinity with NLGN1, NLGN2 and NLGN3; prevents interaction with DAG1/alpha-dystroglycan; modulates interaction with alpha-latrotoxin" evidence="2 6 7 12">
    <location>
        <begin position="201"/>
        <end position="230"/>
    </location>
</feature>
<feature type="region of interest" description="Disordered" evidence="5">
    <location>
        <begin position="350"/>
        <end position="381"/>
    </location>
</feature>
<feature type="region of interest" description="Disordered" evidence="5">
    <location>
        <begin position="435"/>
        <end position="468"/>
    </location>
</feature>
<feature type="binding site" evidence="10">
    <location>
        <position position="137"/>
    </location>
    <ligand>
        <name>Ca(2+)</name>
        <dbReference type="ChEBI" id="CHEBI:29108"/>
    </ligand>
</feature>
<feature type="binding site" evidence="10">
    <location>
        <position position="154"/>
    </location>
    <ligand>
        <name>Ca(2+)</name>
        <dbReference type="ChEBI" id="CHEBI:29108"/>
    </ligand>
</feature>
<feature type="binding site" evidence="10">
    <location>
        <position position="236"/>
    </location>
    <ligand>
        <name>Ca(2+)</name>
        <dbReference type="ChEBI" id="CHEBI:29108"/>
    </ligand>
</feature>
<feature type="binding site" evidence="10">
    <location>
        <position position="238"/>
    </location>
    <ligand>
        <name>Ca(2+)</name>
        <dbReference type="ChEBI" id="CHEBI:29108"/>
    </ligand>
</feature>
<feature type="modified residue" description="Phosphoserine" evidence="2">
    <location>
        <position position="450"/>
    </location>
</feature>
<feature type="modified residue" description="Phosphoserine" evidence="2">
    <location>
        <position position="451"/>
    </location>
</feature>
<feature type="modified residue" description="Phosphoserine" evidence="2">
    <location>
        <position position="454"/>
    </location>
</feature>
<feature type="glycosylation site" description="N-linked (GlcNAc...) asparagine" evidence="3">
    <location>
        <position position="184"/>
    </location>
</feature>
<feature type="glycosylation site" description="O-linked (Xyl...) (heparan sulfate) serine" evidence="1">
    <location>
        <position position="346"/>
    </location>
</feature>
<feature type="splice variant" id="VSP_003496" description="In isoform 3b and isoform 4b." evidence="15">
    <location>
        <begin position="201"/>
        <end position="230"/>
    </location>
</feature>
<feature type="splice variant" id="VSP_003497" description="In isoform 2b and isoform 4b." evidence="15">
    <location>
        <begin position="363"/>
        <end position="468"/>
    </location>
</feature>
<feature type="strand" evidence="17">
    <location>
        <begin position="84"/>
        <end position="99"/>
    </location>
</feature>
<feature type="helix" evidence="17">
    <location>
        <begin position="102"/>
        <end position="104"/>
    </location>
</feature>
<feature type="strand" evidence="17">
    <location>
        <begin position="108"/>
        <end position="118"/>
    </location>
</feature>
<feature type="strand" evidence="17">
    <location>
        <begin position="122"/>
        <end position="132"/>
    </location>
</feature>
<feature type="strand" evidence="17">
    <location>
        <begin position="138"/>
        <end position="144"/>
    </location>
</feature>
<feature type="strand" evidence="17">
    <location>
        <begin position="147"/>
        <end position="157"/>
    </location>
</feature>
<feature type="strand" evidence="17">
    <location>
        <begin position="159"/>
        <end position="162"/>
    </location>
</feature>
<feature type="strand" evidence="17">
    <location>
        <begin position="170"/>
        <end position="172"/>
    </location>
</feature>
<feature type="strand" evidence="17">
    <location>
        <begin position="174"/>
        <end position="181"/>
    </location>
</feature>
<feature type="strand" evidence="17">
    <location>
        <begin position="184"/>
        <end position="189"/>
    </location>
</feature>
<feature type="strand" evidence="17">
    <location>
        <begin position="195"/>
        <end position="197"/>
    </location>
</feature>
<feature type="helix" evidence="17">
    <location>
        <begin position="218"/>
        <end position="232"/>
    </location>
</feature>
<feature type="helix" evidence="17">
    <location>
        <begin position="233"/>
        <end position="235"/>
    </location>
</feature>
<feature type="strand" evidence="17">
    <location>
        <begin position="240"/>
        <end position="247"/>
    </location>
</feature>
<feature type="turn" evidence="17">
    <location>
        <begin position="248"/>
        <end position="251"/>
    </location>
</feature>
<feature type="strand" evidence="17">
    <location>
        <begin position="256"/>
        <end position="263"/>
    </location>
</feature>
<feature type="helix" evidence="17">
    <location>
        <begin position="268"/>
        <end position="273"/>
    </location>
</feature>
<feature type="strand" evidence="17">
    <location>
        <begin position="279"/>
        <end position="287"/>
    </location>
</feature>
<keyword id="KW-0002">3D-structure</keyword>
<keyword id="KW-0877">Alternative promoter usage</keyword>
<keyword id="KW-0025">Alternative splicing</keyword>
<keyword id="KW-0037">Angiogenesis</keyword>
<keyword id="KW-0106">Calcium</keyword>
<keyword id="KW-0130">Cell adhesion</keyword>
<keyword id="KW-1003">Cell membrane</keyword>
<keyword id="KW-0966">Cell projection</keyword>
<keyword id="KW-0903">Direct protein sequencing</keyword>
<keyword id="KW-0325">Glycoprotein</keyword>
<keyword id="KW-0357">Heparan sulfate</keyword>
<keyword id="KW-0472">Membrane</keyword>
<keyword id="KW-0479">Metal-binding</keyword>
<keyword id="KW-0597">Phosphoprotein</keyword>
<keyword id="KW-0654">Proteoglycan</keyword>
<keyword id="KW-1185">Reference proteome</keyword>
<keyword id="KW-0677">Repeat</keyword>
<keyword id="KW-0732">Signal</keyword>
<keyword id="KW-0770">Synapse</keyword>
<keyword id="KW-0812">Transmembrane</keyword>
<keyword id="KW-1133">Transmembrane helix</keyword>
<name>NRX1B_RAT</name>